<organism>
    <name type="scientific">Alkalilimnicola ehrlichii (strain ATCC BAA-1101 / DSM 17681 / MLHE-1)</name>
    <dbReference type="NCBI Taxonomy" id="187272"/>
    <lineage>
        <taxon>Bacteria</taxon>
        <taxon>Pseudomonadati</taxon>
        <taxon>Pseudomonadota</taxon>
        <taxon>Gammaproteobacteria</taxon>
        <taxon>Chromatiales</taxon>
        <taxon>Ectothiorhodospiraceae</taxon>
        <taxon>Alkalilimnicola</taxon>
    </lineage>
</organism>
<accession>Q0AAV2</accession>
<keyword id="KW-0227">DNA damage</keyword>
<keyword id="KW-0234">DNA repair</keyword>
<keyword id="KW-0235">DNA replication</keyword>
<keyword id="KW-0436">Ligase</keyword>
<keyword id="KW-0460">Magnesium</keyword>
<keyword id="KW-0464">Manganese</keyword>
<keyword id="KW-0479">Metal-binding</keyword>
<keyword id="KW-0520">NAD</keyword>
<keyword id="KW-1185">Reference proteome</keyword>
<keyword id="KW-0862">Zinc</keyword>
<comment type="function">
    <text evidence="1">DNA ligase that catalyzes the formation of phosphodiester linkages between 5'-phosphoryl and 3'-hydroxyl groups in double-stranded DNA using NAD as a coenzyme and as the energy source for the reaction. It is essential for DNA replication and repair of damaged DNA.</text>
</comment>
<comment type="catalytic activity">
    <reaction evidence="1">
        <text>NAD(+) + (deoxyribonucleotide)n-3'-hydroxyl + 5'-phospho-(deoxyribonucleotide)m = (deoxyribonucleotide)n+m + AMP + beta-nicotinamide D-nucleotide.</text>
        <dbReference type="EC" id="6.5.1.2"/>
    </reaction>
</comment>
<comment type="cofactor">
    <cofactor evidence="1">
        <name>Mg(2+)</name>
        <dbReference type="ChEBI" id="CHEBI:18420"/>
    </cofactor>
    <cofactor evidence="1">
        <name>Mn(2+)</name>
        <dbReference type="ChEBI" id="CHEBI:29035"/>
    </cofactor>
</comment>
<comment type="similarity">
    <text evidence="1">Belongs to the NAD-dependent DNA ligase family. LigA subfamily.</text>
</comment>
<gene>
    <name evidence="1" type="primary">ligA</name>
    <name type="ordered locus">Mlg_0681</name>
</gene>
<evidence type="ECO:0000255" key="1">
    <source>
        <dbReference type="HAMAP-Rule" id="MF_01588"/>
    </source>
</evidence>
<name>DNLJ_ALKEH</name>
<reference key="1">
    <citation type="submission" date="2006-08" db="EMBL/GenBank/DDBJ databases">
        <title>Complete sequence of Alkalilimnicola ehrilichei MLHE-1.</title>
        <authorList>
            <person name="Copeland A."/>
            <person name="Lucas S."/>
            <person name="Lapidus A."/>
            <person name="Barry K."/>
            <person name="Detter J.C."/>
            <person name="Glavina del Rio T."/>
            <person name="Hammon N."/>
            <person name="Israni S."/>
            <person name="Dalin E."/>
            <person name="Tice H."/>
            <person name="Pitluck S."/>
            <person name="Sims D."/>
            <person name="Brettin T."/>
            <person name="Bruce D."/>
            <person name="Han C."/>
            <person name="Tapia R."/>
            <person name="Gilna P."/>
            <person name="Schmutz J."/>
            <person name="Larimer F."/>
            <person name="Land M."/>
            <person name="Hauser L."/>
            <person name="Kyrpides N."/>
            <person name="Mikhailova N."/>
            <person name="Oremland R.S."/>
            <person name="Hoeft S.E."/>
            <person name="Switzer-Blum J."/>
            <person name="Kulp T."/>
            <person name="King G."/>
            <person name="Tabita R."/>
            <person name="Witte B."/>
            <person name="Santini J.M."/>
            <person name="Basu P."/>
            <person name="Hollibaugh J.T."/>
            <person name="Xie G."/>
            <person name="Stolz J.F."/>
            <person name="Richardson P."/>
        </authorList>
    </citation>
    <scope>NUCLEOTIDE SEQUENCE [LARGE SCALE GENOMIC DNA]</scope>
    <source>
        <strain>ATCC BAA-1101 / DSM 17681 / MLHE-1</strain>
    </source>
</reference>
<sequence>MAQTGTDPQARIEALRREIREHDHRYYVLDAPVIADAEYDALMAELQALEAEHPELITPDSPSQRVAGRPAEGFGEVTHAEPMLSLDNAFEEADLAEFDRRVRQALGLDPVVYVAEPKLDGLSVSIRYEDGRLVRAGTRGDGRVGEAITENVRTIRSVPLRLRGEGWPPVMEVRGEVVIRRADFERLNEQRLADGERPFANPRNAAAGSLRQLDPRITARRRLTFFTFGVAAAGRLAASHHEVLDKLAGWGFRVNERVERVRGLDGCREYYQRLLADRDELSFEIDGVVYKVDDLDAREELGFTARAPRWAIAWKLPAQEATTVVRRILPSVGRTGAITPVAELEPVGVGGVTVSRATLHNLDEVRRKDVRKGDTVMVRRAGDVIPEITAVVTEKRPEGAEPWAMPAECPVCGSEVLRLDDEAVHRCMGGLYCPAQREGALLHFASRKALDIDGLGEKVVSQLVERGMVRSPADLFTLEHCQLAGLERMGDKSADNLVAALDKARRTTLPRFLYALGIQHVGEVTARRLAEHFGSLEAIMNADESALAETPDVGPVVAQAIAHFFAEPHNREVVQALRAAGVTWEEVDPAERGEQPLAGRTFVLTGTLSGMTRDEAKAALEALGARVSGSVSKKTDYLVAGEKAGSKLAKAESLGVEVLDEQALQALLQEHGR</sequence>
<protein>
    <recommendedName>
        <fullName evidence="1">DNA ligase</fullName>
        <ecNumber evidence="1">6.5.1.2</ecNumber>
    </recommendedName>
    <alternativeName>
        <fullName evidence="1">Polydeoxyribonucleotide synthase [NAD(+)]</fullName>
    </alternativeName>
</protein>
<feature type="chain" id="PRO_0000313108" description="DNA ligase">
    <location>
        <begin position="1"/>
        <end position="673"/>
    </location>
</feature>
<feature type="domain" description="BRCT" evidence="1">
    <location>
        <begin position="592"/>
        <end position="673"/>
    </location>
</feature>
<feature type="active site" description="N6-AMP-lysine intermediate" evidence="1">
    <location>
        <position position="118"/>
    </location>
</feature>
<feature type="binding site" evidence="1">
    <location>
        <begin position="36"/>
        <end position="40"/>
    </location>
    <ligand>
        <name>NAD(+)</name>
        <dbReference type="ChEBI" id="CHEBI:57540"/>
    </ligand>
</feature>
<feature type="binding site" evidence="1">
    <location>
        <begin position="85"/>
        <end position="86"/>
    </location>
    <ligand>
        <name>NAD(+)</name>
        <dbReference type="ChEBI" id="CHEBI:57540"/>
    </ligand>
</feature>
<feature type="binding site" evidence="1">
    <location>
        <position position="116"/>
    </location>
    <ligand>
        <name>NAD(+)</name>
        <dbReference type="ChEBI" id="CHEBI:57540"/>
    </ligand>
</feature>
<feature type="binding site" evidence="1">
    <location>
        <position position="139"/>
    </location>
    <ligand>
        <name>NAD(+)</name>
        <dbReference type="ChEBI" id="CHEBI:57540"/>
    </ligand>
</feature>
<feature type="binding site" evidence="1">
    <location>
        <position position="176"/>
    </location>
    <ligand>
        <name>NAD(+)</name>
        <dbReference type="ChEBI" id="CHEBI:57540"/>
    </ligand>
</feature>
<feature type="binding site" evidence="1">
    <location>
        <position position="291"/>
    </location>
    <ligand>
        <name>NAD(+)</name>
        <dbReference type="ChEBI" id="CHEBI:57540"/>
    </ligand>
</feature>
<feature type="binding site" evidence="1">
    <location>
        <position position="315"/>
    </location>
    <ligand>
        <name>NAD(+)</name>
        <dbReference type="ChEBI" id="CHEBI:57540"/>
    </ligand>
</feature>
<feature type="binding site" evidence="1">
    <location>
        <position position="409"/>
    </location>
    <ligand>
        <name>Zn(2+)</name>
        <dbReference type="ChEBI" id="CHEBI:29105"/>
    </ligand>
</feature>
<feature type="binding site" evidence="1">
    <location>
        <position position="412"/>
    </location>
    <ligand>
        <name>Zn(2+)</name>
        <dbReference type="ChEBI" id="CHEBI:29105"/>
    </ligand>
</feature>
<feature type="binding site" evidence="1">
    <location>
        <position position="427"/>
    </location>
    <ligand>
        <name>Zn(2+)</name>
        <dbReference type="ChEBI" id="CHEBI:29105"/>
    </ligand>
</feature>
<feature type="binding site" evidence="1">
    <location>
        <position position="433"/>
    </location>
    <ligand>
        <name>Zn(2+)</name>
        <dbReference type="ChEBI" id="CHEBI:29105"/>
    </ligand>
</feature>
<dbReference type="EC" id="6.5.1.2" evidence="1"/>
<dbReference type="EMBL" id="CP000453">
    <property type="protein sequence ID" value="ABI56035.1"/>
    <property type="molecule type" value="Genomic_DNA"/>
</dbReference>
<dbReference type="RefSeq" id="WP_011628430.1">
    <property type="nucleotide sequence ID" value="NC_008340.1"/>
</dbReference>
<dbReference type="SMR" id="Q0AAV2"/>
<dbReference type="KEGG" id="aeh:Mlg_0681"/>
<dbReference type="eggNOG" id="COG0272">
    <property type="taxonomic scope" value="Bacteria"/>
</dbReference>
<dbReference type="HOGENOM" id="CLU_007764_2_1_6"/>
<dbReference type="OrthoDB" id="9759736at2"/>
<dbReference type="Proteomes" id="UP000001962">
    <property type="component" value="Chromosome"/>
</dbReference>
<dbReference type="GO" id="GO:0005829">
    <property type="term" value="C:cytosol"/>
    <property type="evidence" value="ECO:0007669"/>
    <property type="project" value="TreeGrafter"/>
</dbReference>
<dbReference type="GO" id="GO:0003677">
    <property type="term" value="F:DNA binding"/>
    <property type="evidence" value="ECO:0007669"/>
    <property type="project" value="InterPro"/>
</dbReference>
<dbReference type="GO" id="GO:0003911">
    <property type="term" value="F:DNA ligase (NAD+) activity"/>
    <property type="evidence" value="ECO:0007669"/>
    <property type="project" value="UniProtKB-UniRule"/>
</dbReference>
<dbReference type="GO" id="GO:0046872">
    <property type="term" value="F:metal ion binding"/>
    <property type="evidence" value="ECO:0007669"/>
    <property type="project" value="UniProtKB-KW"/>
</dbReference>
<dbReference type="GO" id="GO:0006281">
    <property type="term" value="P:DNA repair"/>
    <property type="evidence" value="ECO:0007669"/>
    <property type="project" value="UniProtKB-KW"/>
</dbReference>
<dbReference type="GO" id="GO:0006260">
    <property type="term" value="P:DNA replication"/>
    <property type="evidence" value="ECO:0007669"/>
    <property type="project" value="UniProtKB-KW"/>
</dbReference>
<dbReference type="CDD" id="cd17748">
    <property type="entry name" value="BRCT_DNA_ligase_like"/>
    <property type="match status" value="1"/>
</dbReference>
<dbReference type="CDD" id="cd00114">
    <property type="entry name" value="LIGANc"/>
    <property type="match status" value="1"/>
</dbReference>
<dbReference type="FunFam" id="1.10.150.20:FF:000006">
    <property type="entry name" value="DNA ligase"/>
    <property type="match status" value="1"/>
</dbReference>
<dbReference type="FunFam" id="1.10.150.20:FF:000007">
    <property type="entry name" value="DNA ligase"/>
    <property type="match status" value="1"/>
</dbReference>
<dbReference type="FunFam" id="1.10.287.610:FF:000002">
    <property type="entry name" value="DNA ligase"/>
    <property type="match status" value="1"/>
</dbReference>
<dbReference type="FunFam" id="2.40.50.140:FF:000012">
    <property type="entry name" value="DNA ligase"/>
    <property type="match status" value="1"/>
</dbReference>
<dbReference type="FunFam" id="3.30.470.30:FF:000001">
    <property type="entry name" value="DNA ligase"/>
    <property type="match status" value="1"/>
</dbReference>
<dbReference type="FunFam" id="3.40.50.10190:FF:000054">
    <property type="entry name" value="DNA ligase"/>
    <property type="match status" value="1"/>
</dbReference>
<dbReference type="Gene3D" id="6.20.10.30">
    <property type="match status" value="1"/>
</dbReference>
<dbReference type="Gene3D" id="1.10.150.20">
    <property type="entry name" value="5' to 3' exonuclease, C-terminal subdomain"/>
    <property type="match status" value="2"/>
</dbReference>
<dbReference type="Gene3D" id="3.40.50.10190">
    <property type="entry name" value="BRCT domain"/>
    <property type="match status" value="1"/>
</dbReference>
<dbReference type="Gene3D" id="3.30.470.30">
    <property type="entry name" value="DNA ligase/mRNA capping enzyme"/>
    <property type="match status" value="1"/>
</dbReference>
<dbReference type="Gene3D" id="1.10.287.610">
    <property type="entry name" value="Helix hairpin bin"/>
    <property type="match status" value="1"/>
</dbReference>
<dbReference type="Gene3D" id="2.40.50.140">
    <property type="entry name" value="Nucleic acid-binding proteins"/>
    <property type="match status" value="1"/>
</dbReference>
<dbReference type="HAMAP" id="MF_01588">
    <property type="entry name" value="DNA_ligase_A"/>
    <property type="match status" value="1"/>
</dbReference>
<dbReference type="InterPro" id="IPR001357">
    <property type="entry name" value="BRCT_dom"/>
</dbReference>
<dbReference type="InterPro" id="IPR036420">
    <property type="entry name" value="BRCT_dom_sf"/>
</dbReference>
<dbReference type="InterPro" id="IPR041663">
    <property type="entry name" value="DisA/LigA_HHH"/>
</dbReference>
<dbReference type="InterPro" id="IPR001679">
    <property type="entry name" value="DNA_ligase"/>
</dbReference>
<dbReference type="InterPro" id="IPR033136">
    <property type="entry name" value="DNA_ligase_CS"/>
</dbReference>
<dbReference type="InterPro" id="IPR013839">
    <property type="entry name" value="DNAligase_adenylation"/>
</dbReference>
<dbReference type="InterPro" id="IPR013840">
    <property type="entry name" value="DNAligase_N"/>
</dbReference>
<dbReference type="InterPro" id="IPR003583">
    <property type="entry name" value="Hlx-hairpin-Hlx_DNA-bd_motif"/>
</dbReference>
<dbReference type="InterPro" id="IPR012340">
    <property type="entry name" value="NA-bd_OB-fold"/>
</dbReference>
<dbReference type="InterPro" id="IPR004150">
    <property type="entry name" value="NAD_DNA_ligase_OB"/>
</dbReference>
<dbReference type="InterPro" id="IPR010994">
    <property type="entry name" value="RuvA_2-like"/>
</dbReference>
<dbReference type="InterPro" id="IPR004149">
    <property type="entry name" value="Znf_DNAligase_C4"/>
</dbReference>
<dbReference type="NCBIfam" id="TIGR00575">
    <property type="entry name" value="dnlj"/>
    <property type="match status" value="1"/>
</dbReference>
<dbReference type="NCBIfam" id="NF005932">
    <property type="entry name" value="PRK07956.1"/>
    <property type="match status" value="1"/>
</dbReference>
<dbReference type="PANTHER" id="PTHR23389">
    <property type="entry name" value="CHROMOSOME TRANSMISSION FIDELITY FACTOR 18"/>
    <property type="match status" value="1"/>
</dbReference>
<dbReference type="PANTHER" id="PTHR23389:SF9">
    <property type="entry name" value="DNA LIGASE"/>
    <property type="match status" value="1"/>
</dbReference>
<dbReference type="Pfam" id="PF00533">
    <property type="entry name" value="BRCT"/>
    <property type="match status" value="1"/>
</dbReference>
<dbReference type="Pfam" id="PF01653">
    <property type="entry name" value="DNA_ligase_aden"/>
    <property type="match status" value="1"/>
</dbReference>
<dbReference type="Pfam" id="PF03120">
    <property type="entry name" value="DNA_ligase_OB"/>
    <property type="match status" value="1"/>
</dbReference>
<dbReference type="Pfam" id="PF03119">
    <property type="entry name" value="DNA_ligase_ZBD"/>
    <property type="match status" value="1"/>
</dbReference>
<dbReference type="Pfam" id="PF12826">
    <property type="entry name" value="HHH_2"/>
    <property type="match status" value="1"/>
</dbReference>
<dbReference type="Pfam" id="PF14520">
    <property type="entry name" value="HHH_5"/>
    <property type="match status" value="1"/>
</dbReference>
<dbReference type="Pfam" id="PF22745">
    <property type="entry name" value="Nlig-Ia"/>
    <property type="match status" value="1"/>
</dbReference>
<dbReference type="PIRSF" id="PIRSF001604">
    <property type="entry name" value="LigA"/>
    <property type="match status" value="1"/>
</dbReference>
<dbReference type="SMART" id="SM00292">
    <property type="entry name" value="BRCT"/>
    <property type="match status" value="1"/>
</dbReference>
<dbReference type="SMART" id="SM00278">
    <property type="entry name" value="HhH1"/>
    <property type="match status" value="4"/>
</dbReference>
<dbReference type="SMART" id="SM00532">
    <property type="entry name" value="LIGANc"/>
    <property type="match status" value="1"/>
</dbReference>
<dbReference type="SUPFAM" id="SSF52113">
    <property type="entry name" value="BRCT domain"/>
    <property type="match status" value="1"/>
</dbReference>
<dbReference type="SUPFAM" id="SSF56091">
    <property type="entry name" value="DNA ligase/mRNA capping enzyme, catalytic domain"/>
    <property type="match status" value="1"/>
</dbReference>
<dbReference type="SUPFAM" id="SSF50249">
    <property type="entry name" value="Nucleic acid-binding proteins"/>
    <property type="match status" value="1"/>
</dbReference>
<dbReference type="SUPFAM" id="SSF47781">
    <property type="entry name" value="RuvA domain 2-like"/>
    <property type="match status" value="1"/>
</dbReference>
<dbReference type="PROSITE" id="PS50172">
    <property type="entry name" value="BRCT"/>
    <property type="match status" value="1"/>
</dbReference>
<dbReference type="PROSITE" id="PS01056">
    <property type="entry name" value="DNA_LIGASE_N2"/>
    <property type="match status" value="1"/>
</dbReference>
<proteinExistence type="inferred from homology"/>